<organism>
    <name type="scientific">Human adenovirus A serotype 12</name>
    <name type="common">HAdV-12</name>
    <name type="synonym">Human adenovirus 12</name>
    <dbReference type="NCBI Taxonomy" id="28282"/>
    <lineage>
        <taxon>Viruses</taxon>
        <taxon>Varidnaviria</taxon>
        <taxon>Bamfordvirae</taxon>
        <taxon>Preplasmiviricota</taxon>
        <taxon>Tectiliviricetes</taxon>
        <taxon>Rowavirales</taxon>
        <taxon>Adenoviridae</taxon>
        <taxon>Mastadenovirus</taxon>
        <taxon>Human mastadenovirus A</taxon>
    </lineage>
</organism>
<protein>
    <recommendedName>
        <fullName evidence="1">Pre-protein VI</fullName>
        <shortName evidence="1">pVI</shortName>
    </recommendedName>
    <component>
        <recommendedName>
            <fullName evidence="1">Endosome lysis protein</fullName>
        </recommendedName>
    </component>
    <component>
        <recommendedName>
            <fullName evidence="1">Protease cofactor</fullName>
        </recommendedName>
        <alternativeName>
            <fullName evidence="1">pVI-C</fullName>
        </alternativeName>
    </component>
</protein>
<dbReference type="EMBL" id="L02237">
    <property type="protein sequence ID" value="AAA42516.1"/>
    <property type="molecule type" value="Genomic_DNA"/>
</dbReference>
<dbReference type="EMBL" id="X73487">
    <property type="protein sequence ID" value="CAA51890.1"/>
    <property type="molecule type" value="Genomic_DNA"/>
</dbReference>
<dbReference type="PIR" id="B45393">
    <property type="entry name" value="B45393"/>
</dbReference>
<dbReference type="RefSeq" id="NP_040923.1">
    <property type="nucleotide sequence ID" value="NC_001460.1"/>
</dbReference>
<dbReference type="GeneID" id="1460858"/>
<dbReference type="Proteomes" id="UP000004993">
    <property type="component" value="Genome"/>
</dbReference>
<dbReference type="GO" id="GO:0043657">
    <property type="term" value="C:host cell"/>
    <property type="evidence" value="ECO:0007669"/>
    <property type="project" value="GOC"/>
</dbReference>
<dbReference type="GO" id="GO:0030430">
    <property type="term" value="C:host cell cytoplasm"/>
    <property type="evidence" value="ECO:0007669"/>
    <property type="project" value="UniProtKB-SubCell"/>
</dbReference>
<dbReference type="GO" id="GO:0042025">
    <property type="term" value="C:host cell nucleus"/>
    <property type="evidence" value="ECO:0007669"/>
    <property type="project" value="UniProtKB-SubCell"/>
</dbReference>
<dbReference type="GO" id="GO:0019028">
    <property type="term" value="C:viral capsid"/>
    <property type="evidence" value="ECO:0007669"/>
    <property type="project" value="UniProtKB-UniRule"/>
</dbReference>
<dbReference type="GO" id="GO:0046729">
    <property type="term" value="C:viral procapsid"/>
    <property type="evidence" value="ECO:0007669"/>
    <property type="project" value="UniProtKB-UniRule"/>
</dbReference>
<dbReference type="GO" id="GO:0039664">
    <property type="term" value="P:lysis of host organelle involved in viral entry into host cell"/>
    <property type="evidence" value="ECO:0007669"/>
    <property type="project" value="UniProtKB-UniRule"/>
</dbReference>
<dbReference type="GO" id="GO:0075521">
    <property type="term" value="P:microtubule-dependent intracellular transport of viral material towards nucleus"/>
    <property type="evidence" value="ECO:0007669"/>
    <property type="project" value="UniProtKB-UniRule"/>
</dbReference>
<dbReference type="GO" id="GO:0019076">
    <property type="term" value="P:viral release from host cell"/>
    <property type="evidence" value="ECO:0007669"/>
    <property type="project" value="UniProtKB-UniRule"/>
</dbReference>
<dbReference type="HAMAP" id="MF_04048">
    <property type="entry name" value="ADV_CAP6"/>
    <property type="match status" value="1"/>
</dbReference>
<dbReference type="InterPro" id="IPR004243">
    <property type="entry name" value="McpVI"/>
</dbReference>
<dbReference type="Pfam" id="PF02993">
    <property type="entry name" value="MCPVI"/>
    <property type="match status" value="1"/>
</dbReference>
<gene>
    <name evidence="1" type="primary">L3</name>
</gene>
<comment type="function">
    <molecule>Pre-protein VI</molecule>
    <text evidence="1">During virus assembly, promotes hexon trimers nuclear import through nuclear pore complexes via an importin alpha/beta-dependent mechanism. By analogy to herpesviruses capsid assembly, might act as a chaperone to promote the formation of the icosahedral capsid.</text>
</comment>
<comment type="function">
    <molecule>Endosome lysis protein</molecule>
    <text evidence="1">Structural component of the virion that provides increased stability to the particle shell through its interaction with the core-capsid bridging protein and the hexon-linking protein VIII. Fibers shedding during virus entry into host cell allows the endosome lysis protein to be exposed as a membrane-lytic peptide. Exhibits pH-independent membrane fragmentation activity and probably mediates viral rapid escape from host endosome via organellar membrane lysis. It is not clear if it then remains partially associated with the capsid and involved in the intracellular microtubule-dependent transport of capsid to the nucleus, or if it is lost during endosomal penetration.</text>
</comment>
<comment type="function">
    <molecule>Protease cofactor</molecule>
    <text evidence="1">Cofactor that activates the viral protease. Binds to viral protease in a 1:1 ratio.</text>
</comment>
<comment type="subunit">
    <molecule>Pre-protein VI</molecule>
    <text evidence="1">Interacts with hexon protein; this interaction allows nuclear import of hexon trimers and possibly pre-capsid assembly. Interacts (via C-terminal NLS) with importin alpha/beta.</text>
</comment>
<comment type="subunit">
    <molecule>Endosome lysis protein</molecule>
    <text evidence="1">Interacts (via PPxY motif) with host NEDD4 ubiquitine ligase; this interaction might play a role in virus intracellular transport during entry. Part of a complex composed of the core-capsid bridging protein, the endosome lysis protein VI and the hexon-linking protein VIII; these interactions bridge the virus core to the capsid. Interacts with peripentonal hexons; this interaction stabilizes the capsid by gluing two peripentonal hexons together and joining them with an adjacent group-of-nine hexon.</text>
</comment>
<comment type="subunit">
    <molecule>Protease cofactor</molecule>
    <text evidence="1">Heterodimer with the viral protease; disulfide-linked. Interacts with the viral protease.</text>
</comment>
<comment type="subcellular location">
    <molecule>Pre-protein VI</molecule>
    <subcellularLocation>
        <location evidence="1">Host nucleus</location>
    </subcellularLocation>
    <subcellularLocation>
        <location evidence="1">Host cytoplasm</location>
    </subcellularLocation>
    <text evidence="1">Shuttles between host cytoplasm and nucleus.</text>
</comment>
<comment type="subcellular location">
    <molecule>Endosome lysis protein</molecule>
    <subcellularLocation>
        <location evidence="1">Virion</location>
    </subcellularLocation>
    <text evidence="1">Associates with the base of each peripentonal hexon on the capsid interior. Present in around 360 copies per virion.</text>
</comment>
<comment type="induction">
    <text evidence="1">Expressed in the late phase of the viral replicative cycle.</text>
</comment>
<comment type="domain">
    <text evidence="1">N-terminal amphipathic alpha-helix domain is essential for the membrane lytic activity.</text>
</comment>
<comment type="domain">
    <text evidence="1">Late-budding domains (L domains) are short sequence motifs essential for viral particle release. They can occur individually or in close proximity within structural proteins. They interacts with sorting cellular proteins of the multivesicular body (MVB) pathway. Most of these proteins are class E vacuolar protein sorting factors belonging to ESCRT-I, ESCRT-II or ESCRT-III complexes. Minor capsid protein 6 contains one L domain: a PPXY motif which binds to the WW domains of HECT (homologous to E6-AP C-terminus) E3 ubiquitin ligases, like NEDD4. In adenoviruses, this motif seems to play a role in microtubule-dependent intracellular trafficking toward the nucleus during virus entry into host cell and in suppression of DAXX-mediated repression of the immediate early E1A promoter.</text>
</comment>
<comment type="PTM">
    <text evidence="1">Ubiquitinated by Nedd4 following partial capsid disassembly; which might play a role in intracellular virus movement during entry.</text>
</comment>
<comment type="PTM">
    <molecule>Protease cofactor</molecule>
    <text evidence="1">Contains the major nuclear import and export signals. Proteolytically removed during virion maturation. The processing of the C-terminus turns the precursor into a mature viral structural protein and abrogates its ability to promote hexon import and act as a potential chaperone protein.</text>
</comment>
<comment type="miscellaneous">
    <text evidence="1">All late proteins expressed from the major late promoter are produced by alternative splicing and alternative polyadenylation of the same gene giving rise to non-overlapping ORFs. A leader sequence is present in the N-terminus of all these mRNAs and is recognized by the viral shutoff protein to provide expression although conventional translation via ribosome scanning from the cap has been shut off in the host cell.</text>
</comment>
<comment type="similarity">
    <text evidence="1">Belongs to the adenoviridae protein VI family.</text>
</comment>
<reference key="1">
    <citation type="journal article" date="1993" name="Virology">
        <title>Human adenovirus serotype 12 virion precursors pMu and pVI are cleaved at amino-terminal and carboxy-terminal sites that conform to the adenovirus 2 endoproteinase cleavage consensus sequence.</title>
        <authorList>
            <person name="Freimuth P."/>
            <person name="Anderson C.W."/>
        </authorList>
    </citation>
    <scope>NUCLEOTIDE SEQUENCE [GENOMIC DNA]</scope>
    <scope>PROTEIN SEQUENCE OF 34-47 AND 255-265</scope>
    <source>
        <strain>Huie</strain>
    </source>
</reference>
<reference key="2">
    <citation type="journal article" date="1994" name="J. Virol.">
        <title>Nucleotide sequence of human adenovirus type 12 DNA: comparative functional analysis.</title>
        <authorList>
            <person name="Sprengel J."/>
            <person name="Schmitz B."/>
            <person name="Heuss-Neitzel D."/>
            <person name="Zock C."/>
            <person name="Doerfler W."/>
        </authorList>
    </citation>
    <scope>NUCLEOTIDE SEQUENCE [LARGE SCALE GENOMIC DNA]</scope>
</reference>
<proteinExistence type="evidence at protein level"/>
<accession>P35988</accession>
<name>CAP6_ADE12</name>
<evidence type="ECO:0000255" key="1">
    <source>
        <dbReference type="HAMAP-Rule" id="MF_04048"/>
    </source>
</evidence>
<evidence type="ECO:0000256" key="2">
    <source>
        <dbReference type="SAM" id="MobiDB-lite"/>
    </source>
</evidence>
<evidence type="ECO:0000269" key="3">
    <source>
    </source>
</evidence>
<keyword id="KW-0167">Capsid protein</keyword>
<keyword id="KW-1176">Cytoplasmic inwards viral transport</keyword>
<keyword id="KW-0903">Direct protein sequencing</keyword>
<keyword id="KW-1015">Disulfide bond</keyword>
<keyword id="KW-1035">Host cytoplasm</keyword>
<keyword id="KW-1048">Host nucleus</keyword>
<keyword id="KW-0945">Host-virus interaction</keyword>
<keyword id="KW-0426">Late protein</keyword>
<keyword id="KW-1177">Microtubular inwards viral transport</keyword>
<keyword id="KW-0597">Phosphoprotein</keyword>
<keyword id="KW-1185">Reference proteome</keyword>
<keyword id="KW-0832">Ubl conjugation</keyword>
<keyword id="KW-0118">Viral capsid assembly</keyword>
<keyword id="KW-1162">Viral penetration into host cytoplasm</keyword>
<keyword id="KW-1174">Viral penetration via lysis of host organellar membrane</keyword>
<keyword id="KW-1188">Viral release from host cell</keyword>
<keyword id="KW-0946">Virion</keyword>
<keyword id="KW-1160">Virus entry into host cell</keyword>
<sequence>MEDINFSSLAPRHGTRPYMGTWNEIGTSQLNGGAFNWNSIWSGLKNFGSTIKTYGTKAWNSQTGQMLRDKLKDQNFQQKVVDGLASGINGVVDIANQAVQKKIANRLEPRPDEVMVEEKLPPLETVPGSVPTKGEKRPRPDAEETLVTHTTEPPSYEEAIKQGAALSPTTYPMTKPILPMATRVYGKNENVPMTLELPPLPEPTIADPVGSVPVASVPVASTVSRPAVRPVAVASLRNPRSSNWQSTLNSIVGLGVKSLKRRRCY</sequence>
<organismHost>
    <name type="scientific">Homo sapiens</name>
    <name type="common">Human</name>
    <dbReference type="NCBI Taxonomy" id="9606"/>
</organismHost>
<feature type="chain" id="PRO_0000421426" description="Pre-protein VI" evidence="1">
    <location>
        <begin position="1"/>
        <end position="265"/>
    </location>
</feature>
<feature type="propeptide" id="PRO_0000036549" evidence="1 3">
    <location>
        <begin position="1"/>
        <end position="33"/>
    </location>
</feature>
<feature type="chain" id="PRO_0000036550" description="Endosome lysis protein" evidence="1">
    <location>
        <begin position="34"/>
        <end position="254"/>
    </location>
</feature>
<feature type="chain" id="PRO_0000036551" description="Protease cofactor" evidence="1">
    <location>
        <begin position="255"/>
        <end position="265"/>
    </location>
</feature>
<feature type="region of interest" description="Amphipathic alpha-helix essential for membrane lytic activity" evidence="1">
    <location>
        <begin position="34"/>
        <end position="54"/>
    </location>
</feature>
<feature type="region of interest" description="Involved in endosomal membrane lysis" evidence="1">
    <location>
        <begin position="36"/>
        <end position="53"/>
    </location>
</feature>
<feature type="region of interest" description="Interaction with hexon protein" evidence="1">
    <location>
        <begin position="48"/>
        <end position="74"/>
    </location>
</feature>
<feature type="region of interest" description="Disordered" evidence="2">
    <location>
        <begin position="123"/>
        <end position="155"/>
    </location>
</feature>
<feature type="region of interest" description="Interaction with hexon protein" evidence="1">
    <location>
        <begin position="248"/>
        <end position="254"/>
    </location>
</feature>
<feature type="region of interest" description="Binds to importin alpha/beta, involved in hexon nuclear import" evidence="1">
    <location>
        <begin position="255"/>
        <end position="265"/>
    </location>
</feature>
<feature type="short sequence motif" description="Nuclear export signal" evidence="1">
    <location>
        <begin position="67"/>
        <end position="76"/>
    </location>
</feature>
<feature type="short sequence motif" description="Nuclear localization signal" evidence="1">
    <location>
        <begin position="136"/>
        <end position="140"/>
    </location>
</feature>
<feature type="short sequence motif" description="PPXY motif" evidence="1">
    <location>
        <begin position="153"/>
        <end position="156"/>
    </location>
</feature>
<feature type="short sequence motif" description="Nuclear export signal" evidence="1">
    <location>
        <begin position="246"/>
        <end position="257"/>
    </location>
</feature>
<feature type="short sequence motif" description="Nuclear localization signal" evidence="1">
    <location>
        <begin position="260"/>
        <end position="263"/>
    </location>
</feature>
<feature type="compositionally biased region" description="Basic and acidic residues" evidence="2">
    <location>
        <begin position="133"/>
        <end position="142"/>
    </location>
</feature>
<feature type="site" description="Cleavage; by viral protease" evidence="1">
    <location>
        <begin position="33"/>
        <end position="34"/>
    </location>
</feature>
<feature type="site" description="Cleavage; by viral protease" evidence="1">
    <location>
        <begin position="254"/>
        <end position="255"/>
    </location>
</feature>
<feature type="modified residue" description="Phosphothreonine; by host" evidence="1">
    <location>
        <position position="148"/>
    </location>
</feature>
<feature type="disulfide bond" description="Interchain (with Adenovirus protease)" evidence="1">
    <location>
        <position position="264"/>
    </location>
</feature>